<comment type="function">
    <text evidence="1">Involved in lipopolysaccharide (LPS) biosynthesis. Translocates lipid A-core from the inner to the outer leaflet of the inner membrane. Transmembrane domains (TMD) form a pore in the inner membrane and the ATP-binding domain (NBD) is responsible for energy generation.</text>
</comment>
<comment type="catalytic activity">
    <reaction evidence="1">
        <text>ATP + H2O + lipid A-core oligosaccharideSide 1 = ADP + phosphate + lipid A-core oligosaccharideSide 2.</text>
        <dbReference type="EC" id="7.5.2.6"/>
    </reaction>
</comment>
<comment type="subunit">
    <text evidence="1">Homodimer.</text>
</comment>
<comment type="subcellular location">
    <subcellularLocation>
        <location evidence="1">Cell inner membrane</location>
        <topology evidence="1">Multi-pass membrane protein</topology>
    </subcellularLocation>
</comment>
<comment type="domain">
    <text evidence="1">In MsbA the ATP-binding domain (NBD) and the transmembrane domain (TMD) are fused.</text>
</comment>
<comment type="similarity">
    <text evidence="1">Belongs to the ABC transporter superfamily. Lipid exporter (TC 3.A.1.106) family.</text>
</comment>
<organism>
    <name type="scientific">Psychrobacter arcticus (strain DSM 17307 / VKM B-2377 / 273-4)</name>
    <dbReference type="NCBI Taxonomy" id="259536"/>
    <lineage>
        <taxon>Bacteria</taxon>
        <taxon>Pseudomonadati</taxon>
        <taxon>Pseudomonadota</taxon>
        <taxon>Gammaproteobacteria</taxon>
        <taxon>Moraxellales</taxon>
        <taxon>Moraxellaceae</taxon>
        <taxon>Psychrobacter</taxon>
    </lineage>
</organism>
<protein>
    <recommendedName>
        <fullName evidence="1">ATP-dependent lipid A-core flippase</fullName>
        <ecNumber evidence="1">7.5.2.6</ecNumber>
    </recommendedName>
    <alternativeName>
        <fullName evidence="1">Lipid A export ATP-binding/permease protein MsbA</fullName>
    </alternativeName>
</protein>
<name>MSBA_PSYA2</name>
<evidence type="ECO:0000255" key="1">
    <source>
        <dbReference type="HAMAP-Rule" id="MF_01703"/>
    </source>
</evidence>
<evidence type="ECO:0000256" key="2">
    <source>
        <dbReference type="SAM" id="MobiDB-lite"/>
    </source>
</evidence>
<reference key="1">
    <citation type="journal article" date="2010" name="Appl. Environ. Microbiol.">
        <title>The genome sequence of Psychrobacter arcticus 273-4, a psychroactive Siberian permafrost bacterium, reveals mechanisms for adaptation to low-temperature growth.</title>
        <authorList>
            <person name="Ayala-del-Rio H.L."/>
            <person name="Chain P.S."/>
            <person name="Grzymski J.J."/>
            <person name="Ponder M.A."/>
            <person name="Ivanova N."/>
            <person name="Bergholz P.W."/>
            <person name="Di Bartolo G."/>
            <person name="Hauser L."/>
            <person name="Land M."/>
            <person name="Bakermans C."/>
            <person name="Rodrigues D."/>
            <person name="Klappenbach J."/>
            <person name="Zarka D."/>
            <person name="Larimer F."/>
            <person name="Richardson P."/>
            <person name="Murray A."/>
            <person name="Thomashow M."/>
            <person name="Tiedje J.M."/>
        </authorList>
    </citation>
    <scope>NUCLEOTIDE SEQUENCE [LARGE SCALE GENOMIC DNA]</scope>
    <source>
        <strain>DSM 17307 / VKM B-2377 / 273-4</strain>
    </source>
</reference>
<accession>Q4FS42</accession>
<feature type="chain" id="PRO_0000271644" description="ATP-dependent lipid A-core flippase">
    <location>
        <begin position="1"/>
        <end position="595"/>
    </location>
</feature>
<feature type="transmembrane region" description="Helical" evidence="1">
    <location>
        <begin position="41"/>
        <end position="61"/>
    </location>
</feature>
<feature type="transmembrane region" description="Helical" evidence="1">
    <location>
        <begin position="81"/>
        <end position="101"/>
    </location>
</feature>
<feature type="transmembrane region" description="Helical" evidence="1">
    <location>
        <begin position="169"/>
        <end position="189"/>
    </location>
</feature>
<feature type="transmembrane region" description="Helical" evidence="1">
    <location>
        <begin position="266"/>
        <end position="286"/>
    </location>
</feature>
<feature type="domain" description="ABC transmembrane type-1" evidence="1">
    <location>
        <begin position="45"/>
        <end position="326"/>
    </location>
</feature>
<feature type="domain" description="ABC transporter" evidence="1">
    <location>
        <begin position="357"/>
        <end position="592"/>
    </location>
</feature>
<feature type="region of interest" description="Disordered" evidence="2">
    <location>
        <begin position="1"/>
        <end position="20"/>
    </location>
</feature>
<feature type="compositionally biased region" description="Low complexity" evidence="2">
    <location>
        <begin position="9"/>
        <end position="19"/>
    </location>
</feature>
<feature type="binding site" evidence="1">
    <location>
        <begin position="390"/>
        <end position="397"/>
    </location>
    <ligand>
        <name>ATP</name>
        <dbReference type="ChEBI" id="CHEBI:30616"/>
    </ligand>
</feature>
<gene>
    <name evidence="1" type="primary">msbA</name>
    <name type="ordered locus">Psyc_1316</name>
</gene>
<keyword id="KW-0067">ATP-binding</keyword>
<keyword id="KW-0997">Cell inner membrane</keyword>
<keyword id="KW-1003">Cell membrane</keyword>
<keyword id="KW-0445">Lipid transport</keyword>
<keyword id="KW-0472">Membrane</keyword>
<keyword id="KW-0547">Nucleotide-binding</keyword>
<keyword id="KW-1185">Reference proteome</keyword>
<keyword id="KW-1278">Translocase</keyword>
<keyword id="KW-0812">Transmembrane</keyword>
<keyword id="KW-1133">Transmembrane helix</keyword>
<keyword id="KW-0813">Transport</keyword>
<dbReference type="EC" id="7.5.2.6" evidence="1"/>
<dbReference type="EMBL" id="CP000082">
    <property type="protein sequence ID" value="AAZ19166.1"/>
    <property type="molecule type" value="Genomic_DNA"/>
</dbReference>
<dbReference type="RefSeq" id="WP_011280588.1">
    <property type="nucleotide sequence ID" value="NC_007204.1"/>
</dbReference>
<dbReference type="SMR" id="Q4FS42"/>
<dbReference type="STRING" id="259536.Psyc_1316"/>
<dbReference type="KEGG" id="par:Psyc_1316"/>
<dbReference type="eggNOG" id="COG1132">
    <property type="taxonomic scope" value="Bacteria"/>
</dbReference>
<dbReference type="HOGENOM" id="CLU_000604_84_3_6"/>
<dbReference type="OrthoDB" id="9806127at2"/>
<dbReference type="Proteomes" id="UP000000546">
    <property type="component" value="Chromosome"/>
</dbReference>
<dbReference type="GO" id="GO:0005886">
    <property type="term" value="C:plasma membrane"/>
    <property type="evidence" value="ECO:0007669"/>
    <property type="project" value="UniProtKB-SubCell"/>
</dbReference>
<dbReference type="GO" id="GO:0015421">
    <property type="term" value="F:ABC-type oligopeptide transporter activity"/>
    <property type="evidence" value="ECO:0007669"/>
    <property type="project" value="TreeGrafter"/>
</dbReference>
<dbReference type="GO" id="GO:0005524">
    <property type="term" value="F:ATP binding"/>
    <property type="evidence" value="ECO:0007669"/>
    <property type="project" value="UniProtKB-KW"/>
</dbReference>
<dbReference type="GO" id="GO:0016887">
    <property type="term" value="F:ATP hydrolysis activity"/>
    <property type="evidence" value="ECO:0007669"/>
    <property type="project" value="InterPro"/>
</dbReference>
<dbReference type="GO" id="GO:0034040">
    <property type="term" value="F:ATPase-coupled lipid transmembrane transporter activity"/>
    <property type="evidence" value="ECO:0007669"/>
    <property type="project" value="InterPro"/>
</dbReference>
<dbReference type="CDD" id="cd18552">
    <property type="entry name" value="ABC_6TM_MsbA_like"/>
    <property type="match status" value="1"/>
</dbReference>
<dbReference type="FunFam" id="3.40.50.300:FF:000218">
    <property type="entry name" value="Multidrug ABC transporter ATP-binding protein"/>
    <property type="match status" value="1"/>
</dbReference>
<dbReference type="Gene3D" id="1.20.1560.10">
    <property type="entry name" value="ABC transporter type 1, transmembrane domain"/>
    <property type="match status" value="1"/>
</dbReference>
<dbReference type="Gene3D" id="3.40.50.300">
    <property type="entry name" value="P-loop containing nucleotide triphosphate hydrolases"/>
    <property type="match status" value="1"/>
</dbReference>
<dbReference type="InterPro" id="IPR003593">
    <property type="entry name" value="AAA+_ATPase"/>
</dbReference>
<dbReference type="InterPro" id="IPR011527">
    <property type="entry name" value="ABC1_TM_dom"/>
</dbReference>
<dbReference type="InterPro" id="IPR036640">
    <property type="entry name" value="ABC1_TM_sf"/>
</dbReference>
<dbReference type="InterPro" id="IPR003439">
    <property type="entry name" value="ABC_transporter-like_ATP-bd"/>
</dbReference>
<dbReference type="InterPro" id="IPR017871">
    <property type="entry name" value="ABC_transporter-like_CS"/>
</dbReference>
<dbReference type="InterPro" id="IPR011917">
    <property type="entry name" value="ABC_transpr_lipidA"/>
</dbReference>
<dbReference type="InterPro" id="IPR027417">
    <property type="entry name" value="P-loop_NTPase"/>
</dbReference>
<dbReference type="InterPro" id="IPR039421">
    <property type="entry name" value="Type_1_exporter"/>
</dbReference>
<dbReference type="NCBIfam" id="TIGR02203">
    <property type="entry name" value="MsbA_lipidA"/>
    <property type="match status" value="1"/>
</dbReference>
<dbReference type="PANTHER" id="PTHR43394:SF1">
    <property type="entry name" value="ATP-BINDING CASSETTE SUB-FAMILY B MEMBER 10, MITOCHONDRIAL"/>
    <property type="match status" value="1"/>
</dbReference>
<dbReference type="PANTHER" id="PTHR43394">
    <property type="entry name" value="ATP-DEPENDENT PERMEASE MDL1, MITOCHONDRIAL"/>
    <property type="match status" value="1"/>
</dbReference>
<dbReference type="Pfam" id="PF00664">
    <property type="entry name" value="ABC_membrane"/>
    <property type="match status" value="1"/>
</dbReference>
<dbReference type="Pfam" id="PF00005">
    <property type="entry name" value="ABC_tran"/>
    <property type="match status" value="1"/>
</dbReference>
<dbReference type="SMART" id="SM00382">
    <property type="entry name" value="AAA"/>
    <property type="match status" value="1"/>
</dbReference>
<dbReference type="SUPFAM" id="SSF90123">
    <property type="entry name" value="ABC transporter transmembrane region"/>
    <property type="match status" value="1"/>
</dbReference>
<dbReference type="SUPFAM" id="SSF52540">
    <property type="entry name" value="P-loop containing nucleoside triphosphate hydrolases"/>
    <property type="match status" value="1"/>
</dbReference>
<dbReference type="PROSITE" id="PS50929">
    <property type="entry name" value="ABC_TM1F"/>
    <property type="match status" value="1"/>
</dbReference>
<dbReference type="PROSITE" id="PS00211">
    <property type="entry name" value="ABC_TRANSPORTER_1"/>
    <property type="match status" value="1"/>
</dbReference>
<dbReference type="PROSITE" id="PS50893">
    <property type="entry name" value="ABC_TRANSPORTER_2"/>
    <property type="match status" value="1"/>
</dbReference>
<dbReference type="PROSITE" id="PS51239">
    <property type="entry name" value="MSBA"/>
    <property type="match status" value="1"/>
</dbReference>
<sequence>MSQAYQPDSTKTSAKKSSAVTLNPPKRKTLMRLLAYLKPYWWAILLTITGFAINAGTEIWIAKLLQYITDAINQNDQSKQGLFPFIIVMLFFVRGVGSFLGNYYTALVSRNLVYELRVEVFNKLLRLPSSFYLANPAGTISSKLIFDVEQVTAASTDSLKTLLRDGLTVIALMGFLLYSNWRLTLILFVVLPPILWIIRVASKRYLKLSKGIQATMGGVSHITNEVINGYQVVKNYGGQAYESKRFDEVSKKNLRQGMKIVVTNSINTPAVQLLMAVAMAVVVWLALRPAVIDDISAGQFISYIAAAGLLSKPVRSLTDVNQQLQRGIAAGESIFALLDEPEEEDTGVLSPALVGEIKLDNISLVYPDSTVALHDFNLDIRAGETVALVGRSGAGKSSLVNLLTRTLSTSSGQITLDGMPIEDIKLESLRAQIAMVNQQVVLFNTTVFNNIAYGSLAHKTPAEVEQAAKDAFAHDFIMQMPNGYQSEIGAEGLQLSGGQRQRLSIARALLKDAPILILDEATSALDNESEYYIQKALDNIMRNRTTLVIAHRLTTIESADRIAVLDGGRIVELGTHAELMQLHGHYAQMYARDFE</sequence>
<proteinExistence type="inferred from homology"/>